<protein>
    <recommendedName>
        <fullName evidence="1">Biosynthetic peptidoglycan transglycosylase</fullName>
        <ecNumber evidence="1">2.4.99.28</ecNumber>
    </recommendedName>
    <alternativeName>
        <fullName evidence="1">Glycan polymerase</fullName>
    </alternativeName>
    <alternativeName>
        <fullName evidence="1">Peptidoglycan glycosyltransferase MtgA</fullName>
        <shortName evidence="1">PGT</shortName>
    </alternativeName>
</protein>
<feature type="chain" id="PRO_0000083150" description="Biosynthetic peptidoglycan transglycosylase">
    <location>
        <begin position="1"/>
        <end position="243"/>
    </location>
</feature>
<feature type="transmembrane region" description="Helical" evidence="1">
    <location>
        <begin position="21"/>
        <end position="43"/>
    </location>
</feature>
<gene>
    <name evidence="1" type="primary">mtgA</name>
    <name type="ordered locus">PD_1082</name>
</gene>
<accession>Q87CI7</accession>
<keyword id="KW-0997">Cell inner membrane</keyword>
<keyword id="KW-1003">Cell membrane</keyword>
<keyword id="KW-0133">Cell shape</keyword>
<keyword id="KW-0961">Cell wall biogenesis/degradation</keyword>
<keyword id="KW-0328">Glycosyltransferase</keyword>
<keyword id="KW-0472">Membrane</keyword>
<keyword id="KW-0573">Peptidoglycan synthesis</keyword>
<keyword id="KW-1185">Reference proteome</keyword>
<keyword id="KW-0808">Transferase</keyword>
<keyword id="KW-0812">Transmembrane</keyword>
<keyword id="KW-1133">Transmembrane helix</keyword>
<sequence length="243" mass="28249">MYQWIQRDSDVHQRWIWCRRLLIVSLVSALMSVLQVIVFRFVDPPLSMTMVGRYLEAWSDRQWNFRLHYVWCDLEQIAPSVPISLVAAEDQRFPFHHGFDFDAIKKALGRHSRGGHLRGASTISQQVAKNLFLWSGRSFVRKGLEGWYTFWIELFWPKRRILEIYANIAEFGDGVYGVQAAARRYLGKGAADLDESDAAQLAAVLPSPRHYNIQHPGPYIRWRSSWIQRQAKQLGGSAYLDMH</sequence>
<name>MTGA_XYLFT</name>
<reference key="1">
    <citation type="journal article" date="2003" name="J. Bacteriol.">
        <title>Comparative analyses of the complete genome sequences of Pierce's disease and citrus variegated chlorosis strains of Xylella fastidiosa.</title>
        <authorList>
            <person name="Van Sluys M.A."/>
            <person name="de Oliveira M.C."/>
            <person name="Monteiro-Vitorello C.B."/>
            <person name="Miyaki C.Y."/>
            <person name="Furlan L.R."/>
            <person name="Camargo L.E.A."/>
            <person name="da Silva A.C.R."/>
            <person name="Moon D.H."/>
            <person name="Takita M.A."/>
            <person name="Lemos E.G.M."/>
            <person name="Machado M.A."/>
            <person name="Ferro M.I.T."/>
            <person name="da Silva F.R."/>
            <person name="Goldman M.H.S."/>
            <person name="Goldman G.H."/>
            <person name="Lemos M.V.F."/>
            <person name="El-Dorry H."/>
            <person name="Tsai S.M."/>
            <person name="Carrer H."/>
            <person name="Carraro D.M."/>
            <person name="de Oliveira R.C."/>
            <person name="Nunes L.R."/>
            <person name="Siqueira W.J."/>
            <person name="Coutinho L.L."/>
            <person name="Kimura E.T."/>
            <person name="Ferro E.S."/>
            <person name="Harakava R."/>
            <person name="Kuramae E.E."/>
            <person name="Marino C.L."/>
            <person name="Giglioti E."/>
            <person name="Abreu I.L."/>
            <person name="Alves L.M.C."/>
            <person name="do Amaral A.M."/>
            <person name="Baia G.S."/>
            <person name="Blanco S.R."/>
            <person name="Brito M.S."/>
            <person name="Cannavan F.S."/>
            <person name="Celestino A.V."/>
            <person name="da Cunha A.F."/>
            <person name="Fenille R.C."/>
            <person name="Ferro J.A."/>
            <person name="Formighieri E.F."/>
            <person name="Kishi L.T."/>
            <person name="Leoni S.G."/>
            <person name="Oliveira A.R."/>
            <person name="Rosa V.E. Jr."/>
            <person name="Sassaki F.T."/>
            <person name="Sena J.A.D."/>
            <person name="de Souza A.A."/>
            <person name="Truffi D."/>
            <person name="Tsukumo F."/>
            <person name="Yanai G.M."/>
            <person name="Zaros L.G."/>
            <person name="Civerolo E.L."/>
            <person name="Simpson A.J.G."/>
            <person name="Almeida N.F. Jr."/>
            <person name="Setubal J.C."/>
            <person name="Kitajima J.P."/>
        </authorList>
    </citation>
    <scope>NUCLEOTIDE SEQUENCE [LARGE SCALE GENOMIC DNA]</scope>
    <source>
        <strain>Temecula1 / ATCC 700964</strain>
    </source>
</reference>
<evidence type="ECO:0000255" key="1">
    <source>
        <dbReference type="HAMAP-Rule" id="MF_00766"/>
    </source>
</evidence>
<evidence type="ECO:0000305" key="2"/>
<dbReference type="EC" id="2.4.99.28" evidence="1"/>
<dbReference type="EMBL" id="AE009442">
    <property type="protein sequence ID" value="AAO28938.1"/>
    <property type="status" value="ALT_INIT"/>
    <property type="molecule type" value="Genomic_DNA"/>
</dbReference>
<dbReference type="RefSeq" id="WP_012382616.1">
    <property type="nucleotide sequence ID" value="NC_004556.1"/>
</dbReference>
<dbReference type="SMR" id="Q87CI7"/>
<dbReference type="CAZy" id="GT51">
    <property type="family name" value="Glycosyltransferase Family 51"/>
</dbReference>
<dbReference type="GeneID" id="93904868"/>
<dbReference type="KEGG" id="xft:PD_1082"/>
<dbReference type="HOGENOM" id="CLU_006354_1_1_6"/>
<dbReference type="UniPathway" id="UPA00219"/>
<dbReference type="Proteomes" id="UP000002516">
    <property type="component" value="Chromosome"/>
</dbReference>
<dbReference type="GO" id="GO:0009274">
    <property type="term" value="C:peptidoglycan-based cell wall"/>
    <property type="evidence" value="ECO:0007669"/>
    <property type="project" value="InterPro"/>
</dbReference>
<dbReference type="GO" id="GO:0005886">
    <property type="term" value="C:plasma membrane"/>
    <property type="evidence" value="ECO:0007669"/>
    <property type="project" value="UniProtKB-SubCell"/>
</dbReference>
<dbReference type="GO" id="GO:0016763">
    <property type="term" value="F:pentosyltransferase activity"/>
    <property type="evidence" value="ECO:0007669"/>
    <property type="project" value="InterPro"/>
</dbReference>
<dbReference type="GO" id="GO:0008955">
    <property type="term" value="F:peptidoglycan glycosyltransferase activity"/>
    <property type="evidence" value="ECO:0007669"/>
    <property type="project" value="UniProtKB-UniRule"/>
</dbReference>
<dbReference type="GO" id="GO:0071555">
    <property type="term" value="P:cell wall organization"/>
    <property type="evidence" value="ECO:0007669"/>
    <property type="project" value="UniProtKB-KW"/>
</dbReference>
<dbReference type="GO" id="GO:0009252">
    <property type="term" value="P:peptidoglycan biosynthetic process"/>
    <property type="evidence" value="ECO:0007669"/>
    <property type="project" value="UniProtKB-UniRule"/>
</dbReference>
<dbReference type="GO" id="GO:0008360">
    <property type="term" value="P:regulation of cell shape"/>
    <property type="evidence" value="ECO:0007669"/>
    <property type="project" value="UniProtKB-KW"/>
</dbReference>
<dbReference type="Gene3D" id="1.10.3810.10">
    <property type="entry name" value="Biosynthetic peptidoglycan transglycosylase-like"/>
    <property type="match status" value="1"/>
</dbReference>
<dbReference type="HAMAP" id="MF_00766">
    <property type="entry name" value="PGT_MtgA"/>
    <property type="match status" value="1"/>
</dbReference>
<dbReference type="InterPro" id="IPR001264">
    <property type="entry name" value="Glyco_trans_51"/>
</dbReference>
<dbReference type="InterPro" id="IPR023346">
    <property type="entry name" value="Lysozyme-like_dom_sf"/>
</dbReference>
<dbReference type="InterPro" id="IPR036950">
    <property type="entry name" value="PBP_transglycosylase"/>
</dbReference>
<dbReference type="InterPro" id="IPR011812">
    <property type="entry name" value="Pep_trsgly"/>
</dbReference>
<dbReference type="NCBIfam" id="TIGR02070">
    <property type="entry name" value="mono_pep_trsgly"/>
    <property type="match status" value="1"/>
</dbReference>
<dbReference type="PANTHER" id="PTHR30400:SF0">
    <property type="entry name" value="BIOSYNTHETIC PEPTIDOGLYCAN TRANSGLYCOSYLASE"/>
    <property type="match status" value="1"/>
</dbReference>
<dbReference type="PANTHER" id="PTHR30400">
    <property type="entry name" value="MONOFUNCTIONAL BIOSYNTHETIC PEPTIDOGLYCAN TRANSGLYCOSYLASE"/>
    <property type="match status" value="1"/>
</dbReference>
<dbReference type="Pfam" id="PF00912">
    <property type="entry name" value="Transgly"/>
    <property type="match status" value="1"/>
</dbReference>
<dbReference type="SUPFAM" id="SSF53955">
    <property type="entry name" value="Lysozyme-like"/>
    <property type="match status" value="1"/>
</dbReference>
<comment type="function">
    <text evidence="1">Peptidoglycan polymerase that catalyzes glycan chain elongation from lipid-linked precursors.</text>
</comment>
<comment type="catalytic activity">
    <reaction evidence="1">
        <text>[GlcNAc-(1-&gt;4)-Mur2Ac(oyl-L-Ala-gamma-D-Glu-L-Lys-D-Ala-D-Ala)](n)-di-trans,octa-cis-undecaprenyl diphosphate + beta-D-GlcNAc-(1-&gt;4)-Mur2Ac(oyl-L-Ala-gamma-D-Glu-L-Lys-D-Ala-D-Ala)-di-trans,octa-cis-undecaprenyl diphosphate = [GlcNAc-(1-&gt;4)-Mur2Ac(oyl-L-Ala-gamma-D-Glu-L-Lys-D-Ala-D-Ala)](n+1)-di-trans,octa-cis-undecaprenyl diphosphate + di-trans,octa-cis-undecaprenyl diphosphate + H(+)</text>
        <dbReference type="Rhea" id="RHEA:23708"/>
        <dbReference type="Rhea" id="RHEA-COMP:9602"/>
        <dbReference type="Rhea" id="RHEA-COMP:9603"/>
        <dbReference type="ChEBI" id="CHEBI:15378"/>
        <dbReference type="ChEBI" id="CHEBI:58405"/>
        <dbReference type="ChEBI" id="CHEBI:60033"/>
        <dbReference type="ChEBI" id="CHEBI:78435"/>
        <dbReference type="EC" id="2.4.99.28"/>
    </reaction>
</comment>
<comment type="pathway">
    <text evidence="1">Cell wall biogenesis; peptidoglycan biosynthesis.</text>
</comment>
<comment type="subcellular location">
    <subcellularLocation>
        <location evidence="1">Cell inner membrane</location>
        <topology evidence="1">Single-pass membrane protein</topology>
    </subcellularLocation>
</comment>
<comment type="similarity">
    <text evidence="1">Belongs to the glycosyltransferase 51 family.</text>
</comment>
<comment type="sequence caution" evidence="2">
    <conflict type="erroneous initiation">
        <sequence resource="EMBL-CDS" id="AAO28938"/>
    </conflict>
</comment>
<organism>
    <name type="scientific">Xylella fastidiosa (strain Temecula1 / ATCC 700964)</name>
    <dbReference type="NCBI Taxonomy" id="183190"/>
    <lineage>
        <taxon>Bacteria</taxon>
        <taxon>Pseudomonadati</taxon>
        <taxon>Pseudomonadota</taxon>
        <taxon>Gammaproteobacteria</taxon>
        <taxon>Lysobacterales</taxon>
        <taxon>Lysobacteraceae</taxon>
        <taxon>Xylella</taxon>
    </lineage>
</organism>
<proteinExistence type="inferred from homology"/>